<reference key="1">
    <citation type="journal article" date="2012" name="BMC Genomics">
        <title>Comparative genomics and transcriptomics of lineages I, II, and III strains of Listeria monocytogenes.</title>
        <authorList>
            <person name="Hain T."/>
            <person name="Ghai R."/>
            <person name="Billion A."/>
            <person name="Kuenne C.T."/>
            <person name="Steinweg C."/>
            <person name="Izar B."/>
            <person name="Mohamed W."/>
            <person name="Mraheil M."/>
            <person name="Domann E."/>
            <person name="Schaffrath S."/>
            <person name="Karst U."/>
            <person name="Goesmann A."/>
            <person name="Oehm S."/>
            <person name="Puhler A."/>
            <person name="Merkl R."/>
            <person name="Vorwerk S."/>
            <person name="Glaser P."/>
            <person name="Garrido P."/>
            <person name="Rusniok C."/>
            <person name="Buchrieser C."/>
            <person name="Goebel W."/>
            <person name="Chakraborty T."/>
        </authorList>
    </citation>
    <scope>NUCLEOTIDE SEQUENCE [LARGE SCALE GENOMIC DNA]</scope>
    <source>
        <strain>CLIP80459</strain>
    </source>
</reference>
<accession>C1KVK3</accession>
<dbReference type="EC" id="2.5.1.61" evidence="1"/>
<dbReference type="EMBL" id="FM242711">
    <property type="protein sequence ID" value="CAS05328.1"/>
    <property type="molecule type" value="Genomic_DNA"/>
</dbReference>
<dbReference type="RefSeq" id="WP_003725683.1">
    <property type="nucleotide sequence ID" value="NC_012488.1"/>
</dbReference>
<dbReference type="SMR" id="C1KVK3"/>
<dbReference type="KEGG" id="lmc:Lm4b_01567"/>
<dbReference type="HOGENOM" id="CLU_019704_0_2_9"/>
<dbReference type="UniPathway" id="UPA00251">
    <property type="reaction ID" value="UER00319"/>
</dbReference>
<dbReference type="GO" id="GO:0005737">
    <property type="term" value="C:cytoplasm"/>
    <property type="evidence" value="ECO:0007669"/>
    <property type="project" value="TreeGrafter"/>
</dbReference>
<dbReference type="GO" id="GO:0004418">
    <property type="term" value="F:hydroxymethylbilane synthase activity"/>
    <property type="evidence" value="ECO:0007669"/>
    <property type="project" value="UniProtKB-UniRule"/>
</dbReference>
<dbReference type="GO" id="GO:0006782">
    <property type="term" value="P:protoporphyrinogen IX biosynthetic process"/>
    <property type="evidence" value="ECO:0007669"/>
    <property type="project" value="UniProtKB-UniRule"/>
</dbReference>
<dbReference type="CDD" id="cd13646">
    <property type="entry name" value="PBP2_EcHMBS_like"/>
    <property type="match status" value="1"/>
</dbReference>
<dbReference type="FunFam" id="3.30.160.40:FF:000001">
    <property type="entry name" value="Porphobilinogen deaminase"/>
    <property type="match status" value="1"/>
</dbReference>
<dbReference type="FunFam" id="3.40.190.10:FF:000004">
    <property type="entry name" value="Porphobilinogen deaminase"/>
    <property type="match status" value="1"/>
</dbReference>
<dbReference type="FunFam" id="3.40.190.10:FF:000005">
    <property type="entry name" value="Porphobilinogen deaminase"/>
    <property type="match status" value="1"/>
</dbReference>
<dbReference type="Gene3D" id="3.40.190.10">
    <property type="entry name" value="Periplasmic binding protein-like II"/>
    <property type="match status" value="2"/>
</dbReference>
<dbReference type="Gene3D" id="3.30.160.40">
    <property type="entry name" value="Porphobilinogen deaminase, C-terminal domain"/>
    <property type="match status" value="1"/>
</dbReference>
<dbReference type="HAMAP" id="MF_00260">
    <property type="entry name" value="Porphobil_deam"/>
    <property type="match status" value="1"/>
</dbReference>
<dbReference type="InterPro" id="IPR000860">
    <property type="entry name" value="HemC"/>
</dbReference>
<dbReference type="InterPro" id="IPR022419">
    <property type="entry name" value="Porphobilin_deaminase_cofac_BS"/>
</dbReference>
<dbReference type="InterPro" id="IPR022417">
    <property type="entry name" value="Porphobilin_deaminase_N"/>
</dbReference>
<dbReference type="InterPro" id="IPR022418">
    <property type="entry name" value="Porphobilinogen_deaminase_C"/>
</dbReference>
<dbReference type="InterPro" id="IPR036803">
    <property type="entry name" value="Porphobilinogen_deaminase_C_sf"/>
</dbReference>
<dbReference type="NCBIfam" id="TIGR00212">
    <property type="entry name" value="hemC"/>
    <property type="match status" value="1"/>
</dbReference>
<dbReference type="PANTHER" id="PTHR11557">
    <property type="entry name" value="PORPHOBILINOGEN DEAMINASE"/>
    <property type="match status" value="1"/>
</dbReference>
<dbReference type="PANTHER" id="PTHR11557:SF0">
    <property type="entry name" value="PORPHOBILINOGEN DEAMINASE"/>
    <property type="match status" value="1"/>
</dbReference>
<dbReference type="Pfam" id="PF01379">
    <property type="entry name" value="Porphobil_deam"/>
    <property type="match status" value="1"/>
</dbReference>
<dbReference type="Pfam" id="PF03900">
    <property type="entry name" value="Porphobil_deamC"/>
    <property type="match status" value="1"/>
</dbReference>
<dbReference type="PIRSF" id="PIRSF001438">
    <property type="entry name" value="4pyrrol_synth_OHMeBilane_synth"/>
    <property type="match status" value="1"/>
</dbReference>
<dbReference type="PRINTS" id="PR00151">
    <property type="entry name" value="PORPHBDMNASE"/>
</dbReference>
<dbReference type="SUPFAM" id="SSF53850">
    <property type="entry name" value="Periplasmic binding protein-like II"/>
    <property type="match status" value="1"/>
</dbReference>
<dbReference type="SUPFAM" id="SSF54782">
    <property type="entry name" value="Porphobilinogen deaminase (hydroxymethylbilane synthase), C-terminal domain"/>
    <property type="match status" value="1"/>
</dbReference>
<dbReference type="PROSITE" id="PS00533">
    <property type="entry name" value="PORPHOBILINOGEN_DEAM"/>
    <property type="match status" value="1"/>
</dbReference>
<name>HEM3_LISMC</name>
<sequence length="309" mass="33896">MKRKIIVGSRRSKLALTQSNWVINKLKENYPEFDFEIKEIVTKGDRILDVTLSKVGGKGLFVSEVEQALSDEVIDFAVHSMKDVPSSLKEGLIIGAIPKRESPLDCFVFNRVNSLDELPQGSVIGTSSLRRAAQLLKHRPDFVIKPIRGNIDTRLQKLHAENFDAIILAKAGLARMGWLENTTLKLEDIPPELCLPAVGQGALAIECRESDQQIRDMLTSIHHEETGICVEAERVFLKKLNGGCEIPIAGFATRANEVVHFKGLVGNADGSIILASEQAGANPSEIGNKVAEDLLSEGADTIIKELRNI</sequence>
<gene>
    <name evidence="1" type="primary">hemC</name>
    <name type="ordered locus">Lm4b_01567</name>
</gene>
<keyword id="KW-0627">Porphyrin biosynthesis</keyword>
<keyword id="KW-0808">Transferase</keyword>
<organism>
    <name type="scientific">Listeria monocytogenes serotype 4b (strain CLIP80459)</name>
    <dbReference type="NCBI Taxonomy" id="568819"/>
    <lineage>
        <taxon>Bacteria</taxon>
        <taxon>Bacillati</taxon>
        <taxon>Bacillota</taxon>
        <taxon>Bacilli</taxon>
        <taxon>Bacillales</taxon>
        <taxon>Listeriaceae</taxon>
        <taxon>Listeria</taxon>
    </lineage>
</organism>
<protein>
    <recommendedName>
        <fullName evidence="1">Porphobilinogen deaminase</fullName>
        <shortName evidence="1">PBG</shortName>
        <ecNumber evidence="1">2.5.1.61</ecNumber>
    </recommendedName>
    <alternativeName>
        <fullName evidence="1">Hydroxymethylbilane synthase</fullName>
        <shortName evidence="1">HMBS</shortName>
    </alternativeName>
    <alternativeName>
        <fullName evidence="1">Pre-uroporphyrinogen synthase</fullName>
    </alternativeName>
</protein>
<comment type="function">
    <text evidence="1">Tetrapolymerization of the monopyrrole PBG into the hydroxymethylbilane pre-uroporphyrinogen in several discrete steps.</text>
</comment>
<comment type="catalytic activity">
    <reaction evidence="1">
        <text>4 porphobilinogen + H2O = hydroxymethylbilane + 4 NH4(+)</text>
        <dbReference type="Rhea" id="RHEA:13185"/>
        <dbReference type="ChEBI" id="CHEBI:15377"/>
        <dbReference type="ChEBI" id="CHEBI:28938"/>
        <dbReference type="ChEBI" id="CHEBI:57845"/>
        <dbReference type="ChEBI" id="CHEBI:58126"/>
        <dbReference type="EC" id="2.5.1.61"/>
    </reaction>
</comment>
<comment type="cofactor">
    <cofactor evidence="1">
        <name>dipyrromethane</name>
        <dbReference type="ChEBI" id="CHEBI:60342"/>
    </cofactor>
    <text evidence="1">Binds 1 dipyrromethane group covalently.</text>
</comment>
<comment type="pathway">
    <text evidence="1">Porphyrin-containing compound metabolism; protoporphyrin-IX biosynthesis; coproporphyrinogen-III from 5-aminolevulinate: step 2/4.</text>
</comment>
<comment type="subunit">
    <text evidence="1">Monomer.</text>
</comment>
<comment type="miscellaneous">
    <text evidence="1">The porphobilinogen subunits are added to the dipyrromethane group.</text>
</comment>
<comment type="similarity">
    <text evidence="1">Belongs to the HMBS family.</text>
</comment>
<feature type="chain" id="PRO_1000204656" description="Porphobilinogen deaminase">
    <location>
        <begin position="1"/>
        <end position="309"/>
    </location>
</feature>
<feature type="modified residue" description="S-(dipyrrolylmethanemethyl)cysteine" evidence="1">
    <location>
        <position position="244"/>
    </location>
</feature>
<proteinExistence type="inferred from homology"/>
<evidence type="ECO:0000255" key="1">
    <source>
        <dbReference type="HAMAP-Rule" id="MF_00260"/>
    </source>
</evidence>